<comment type="function">
    <text evidence="1">In response to lowered blood pressure, the enzyme renin cleaves angiotensin-1, from angiotensinogen. ACE (angiotensin converting enzyme) then removes a dipeptide to yield the physiologically active peptide angiotensin-2, the most potent pressor substance known, which helps regulate volume and mineral balance of body fluids.</text>
</comment>
<comment type="subcellular location">
    <subcellularLocation>
        <location evidence="4">Secreted</location>
    </subcellularLocation>
</comment>
<comment type="similarity">
    <text evidence="3">Belongs to the serpin family.</text>
</comment>
<organism>
    <name type="scientific">Coturnix japonica</name>
    <name type="common">Japanese quail</name>
    <name type="synonym">Coturnix coturnix japonica</name>
    <dbReference type="NCBI Taxonomy" id="93934"/>
    <lineage>
        <taxon>Eukaryota</taxon>
        <taxon>Metazoa</taxon>
        <taxon>Chordata</taxon>
        <taxon>Craniata</taxon>
        <taxon>Vertebrata</taxon>
        <taxon>Euteleostomi</taxon>
        <taxon>Archelosauria</taxon>
        <taxon>Archosauria</taxon>
        <taxon>Dinosauria</taxon>
        <taxon>Saurischia</taxon>
        <taxon>Theropoda</taxon>
        <taxon>Coelurosauria</taxon>
        <taxon>Aves</taxon>
        <taxon>Neognathae</taxon>
        <taxon>Galloanserae</taxon>
        <taxon>Galliformes</taxon>
        <taxon>Phasianidae</taxon>
        <taxon>Perdicinae</taxon>
        <taxon>Coturnix</taxon>
    </lineage>
</organism>
<keyword id="KW-0903">Direct protein sequencing</keyword>
<keyword id="KW-1185">Reference proteome</keyword>
<keyword id="KW-0964">Secreted</keyword>
<keyword id="KW-0838">Vasoactive</keyword>
<keyword id="KW-0839">Vasoconstrictor</keyword>
<dbReference type="PIR" id="A60624">
    <property type="entry name" value="A60624"/>
</dbReference>
<dbReference type="Proteomes" id="UP000694412">
    <property type="component" value="Unplaced"/>
</dbReference>
<dbReference type="GO" id="GO:0005576">
    <property type="term" value="C:extracellular region"/>
    <property type="evidence" value="ECO:0007669"/>
    <property type="project" value="UniProtKB-SubCell"/>
</dbReference>
<dbReference type="GO" id="GO:0042310">
    <property type="term" value="P:vasoconstriction"/>
    <property type="evidence" value="ECO:0007669"/>
    <property type="project" value="UniProtKB-KW"/>
</dbReference>
<evidence type="ECO:0000250" key="1">
    <source>
        <dbReference type="UniProtKB" id="P01019"/>
    </source>
</evidence>
<evidence type="ECO:0000269" key="2">
    <source>
    </source>
</evidence>
<evidence type="ECO:0000305" key="3"/>
<evidence type="ECO:0000305" key="4">
    <source>
    </source>
</evidence>
<accession>P67886</accession>
<accession>P01018</accession>
<gene>
    <name type="primary">AGT</name>
    <name type="synonym">SERPINA8</name>
</gene>
<proteinExistence type="evidence at protein level"/>
<feature type="peptide" id="PRO_0000032479" description="Angiotensin-1" evidence="2">
    <location>
        <begin position="1"/>
        <end position="10"/>
    </location>
</feature>
<feature type="peptide" id="PRO_0000032480" description="Angiotensin-2" evidence="1">
    <location>
        <begin position="1"/>
        <end position="8"/>
    </location>
</feature>
<feature type="peptide" id="PRO_0000032481" description="Angiotensin-3" evidence="1">
    <location>
        <begin position="2"/>
        <end position="8"/>
    </location>
</feature>
<feature type="non-terminal residue">
    <location>
        <position position="10"/>
    </location>
</feature>
<sequence>DRVYVHPFSL</sequence>
<protein>
    <recommendedName>
        <fullName>Angiotensinogen</fullName>
    </recommendedName>
    <alternativeName>
        <fullName>Serpin A8</fullName>
    </alternativeName>
    <component>
        <recommendedName>
            <fullName>Angiotensin-1</fullName>
        </recommendedName>
        <alternativeName>
            <fullName>Angiotensin I</fullName>
            <shortName>Ang I</shortName>
        </alternativeName>
    </component>
    <component>
        <recommendedName>
            <fullName>Angiotensin-2</fullName>
        </recommendedName>
        <alternativeName>
            <fullName>Angiotensin II</fullName>
            <shortName>Ang II</shortName>
        </alternativeName>
    </component>
    <component>
        <recommendedName>
            <fullName>Angiotensin-3</fullName>
        </recommendedName>
        <alternativeName>
            <fullName>Angiotensin III</fullName>
            <shortName>Ang III</shortName>
        </alternativeName>
        <alternativeName>
            <fullName>Des-Asp[1]-angiotensin II</fullName>
        </alternativeName>
    </component>
</protein>
<name>ANGT_COTJA</name>
<reference key="1">
    <citation type="journal article" date="1990" name="Gen. Comp. Endocrinol.">
        <title>Vasopressor and depressor effects of native angiotensins and inhibition of these effects in the Japanese quail.</title>
        <authorList>
            <person name="Takei Y."/>
            <person name="Hasegawa Y."/>
        </authorList>
    </citation>
    <scope>PROTEIN SEQUENCE</scope>
</reference>